<organism>
    <name type="scientific">Rattus norvegicus</name>
    <name type="common">Rat</name>
    <dbReference type="NCBI Taxonomy" id="10116"/>
    <lineage>
        <taxon>Eukaryota</taxon>
        <taxon>Metazoa</taxon>
        <taxon>Chordata</taxon>
        <taxon>Craniata</taxon>
        <taxon>Vertebrata</taxon>
        <taxon>Euteleostomi</taxon>
        <taxon>Mammalia</taxon>
        <taxon>Eutheria</taxon>
        <taxon>Euarchontoglires</taxon>
        <taxon>Glires</taxon>
        <taxon>Rodentia</taxon>
        <taxon>Myomorpha</taxon>
        <taxon>Muroidea</taxon>
        <taxon>Muridae</taxon>
        <taxon>Murinae</taxon>
        <taxon>Rattus</taxon>
    </lineage>
</organism>
<evidence type="ECO:0000250" key="1">
    <source>
        <dbReference type="UniProtKB" id="P23685"/>
    </source>
</evidence>
<evidence type="ECO:0000250" key="2">
    <source>
        <dbReference type="UniProtKB" id="Q8K596"/>
    </source>
</evidence>
<evidence type="ECO:0000255" key="3"/>
<evidence type="ECO:0000256" key="4">
    <source>
        <dbReference type="SAM" id="MobiDB-lite"/>
    </source>
</evidence>
<evidence type="ECO:0000269" key="5">
    <source>
    </source>
</evidence>
<evidence type="ECO:0000269" key="6">
    <source>
    </source>
</evidence>
<evidence type="ECO:0000269" key="7">
    <source>
    </source>
</evidence>
<evidence type="ECO:0000269" key="8">
    <source>
    </source>
</evidence>
<evidence type="ECO:0000305" key="9"/>
<reference key="1">
    <citation type="journal article" date="1994" name="J. Biol. Chem.">
        <title>Cloning of the NCX2 isoform of the plasma membrane Na(+)-Ca2+ exchanger.</title>
        <authorList>
            <person name="Li Z."/>
            <person name="Matsuoka S."/>
            <person name="Hryshko L.V."/>
            <person name="Nicoll D.A."/>
            <person name="Bershon M.M."/>
            <person name="Burke E.P."/>
            <person name="Lifton R.P."/>
            <person name="Philipson K.D."/>
        </authorList>
    </citation>
    <scope>NUCLEOTIDE SEQUENCE [MRNA]</scope>
    <scope>FUNCTION</scope>
    <scope>SUBCELLULAR LOCATION</scope>
    <scope>ACTIVITY REGULATION</scope>
    <scope>TISSUE SPECIFICITY</scope>
    <source>
        <strain>Sprague-Dawley</strain>
        <tissue>Brain stem</tissue>
    </source>
</reference>
<reference key="2">
    <citation type="journal article" date="1996" name="J. Biol. Chem.">
        <title>Cloning of a third mammalian Na+-Ca2+ exchanger, NCX3.</title>
        <authorList>
            <person name="Nicoll D.A."/>
            <person name="Quednau B.D."/>
            <person name="Qui Z."/>
            <person name="Xia Y.-R."/>
            <person name="Lusis A.J."/>
            <person name="Philipson K.D."/>
        </authorList>
    </citation>
    <scope>TISSUE SPECIFICITY</scope>
    <source>
        <strain>Sprague-Dawley</strain>
    </source>
</reference>
<reference key="3">
    <citation type="journal article" date="1998" name="Am. J. Physiol.">
        <title>Functional comparison of the three isoforms of the Na+/Ca2+ exchanger (NCX1, NCX2, NCX3).</title>
        <authorList>
            <person name="Linck B."/>
            <person name="Qiu Z."/>
            <person name="He Z."/>
            <person name="Tong Q."/>
            <person name="Hilgemann D.W."/>
            <person name="Philipson K.D."/>
        </authorList>
    </citation>
    <scope>FUNCTION</scope>
    <scope>SUBCELLULAR LOCATION</scope>
    <scope>ACTIVITY REGULATION</scope>
</reference>
<reference key="4">
    <citation type="journal article" date="2007" name="Cell Calcium">
        <title>Cellular and subcellular localization of Na+-Ca2+ exchanger protein isoforms, NCX1, NCX2, and NCX3 in cerebral cortex and hippocampus of adult rat.</title>
        <authorList>
            <person name="Minelli A."/>
            <person name="Castaldo P."/>
            <person name="Gobbi P."/>
            <person name="Salucci S."/>
            <person name="Magi S."/>
            <person name="Amoroso S."/>
        </authorList>
    </citation>
    <scope>TISSUE SPECIFICITY</scope>
    <scope>SUBCELLULAR LOCATION</scope>
</reference>
<reference key="5">
    <citation type="journal article" date="2013" name="Mol. Aspects Med.">
        <title>The SLC8 gene family of sodium-calcium exchangers (NCX) - structure, function, and regulation in health and disease.</title>
        <authorList>
            <person name="Khananshvili D."/>
        </authorList>
    </citation>
    <scope>REVIEW</scope>
</reference>
<dbReference type="EMBL" id="U08141">
    <property type="protein sequence ID" value="AAA19920.1"/>
    <property type="molecule type" value="mRNA"/>
</dbReference>
<dbReference type="PIR" id="A54139">
    <property type="entry name" value="A54139"/>
</dbReference>
<dbReference type="RefSeq" id="NP_511174.1">
    <property type="nucleotide sequence ID" value="NM_078619.1"/>
</dbReference>
<dbReference type="SMR" id="P48768"/>
<dbReference type="BioGRID" id="250785">
    <property type="interactions" value="2"/>
</dbReference>
<dbReference type="FunCoup" id="P48768">
    <property type="interactions" value="2637"/>
</dbReference>
<dbReference type="IntAct" id="P48768">
    <property type="interactions" value="2"/>
</dbReference>
<dbReference type="MINT" id="P48768"/>
<dbReference type="STRING" id="10116.ENSRNOP00000042012"/>
<dbReference type="GuidetoPHARMACOLOGY" id="946"/>
<dbReference type="GlyCosmos" id="P48768">
    <property type="glycosylation" value="2 sites, No reported glycans"/>
</dbReference>
<dbReference type="GlyGen" id="P48768">
    <property type="glycosylation" value="3 sites"/>
</dbReference>
<dbReference type="iPTMnet" id="P48768"/>
<dbReference type="PhosphoSitePlus" id="P48768"/>
<dbReference type="SwissPalm" id="P48768"/>
<dbReference type="PaxDb" id="10116-ENSRNOP00000042012"/>
<dbReference type="GeneID" id="140447"/>
<dbReference type="KEGG" id="rno:140447"/>
<dbReference type="UCSC" id="RGD:620194">
    <property type="organism name" value="rat"/>
</dbReference>
<dbReference type="AGR" id="RGD:620194"/>
<dbReference type="CTD" id="6543"/>
<dbReference type="RGD" id="620194">
    <property type="gene designation" value="Slc8a2"/>
</dbReference>
<dbReference type="eggNOG" id="KOG1306">
    <property type="taxonomic scope" value="Eukaryota"/>
</dbReference>
<dbReference type="InParanoid" id="P48768"/>
<dbReference type="Reactome" id="R-RNO-418359">
    <property type="pathway name" value="Reduction of cytosolic Ca++ levels"/>
</dbReference>
<dbReference type="Reactome" id="R-RNO-425561">
    <property type="pathway name" value="Sodium/Calcium exchangers"/>
</dbReference>
<dbReference type="Reactome" id="R-RNO-5578775">
    <property type="pathway name" value="Ion homeostasis"/>
</dbReference>
<dbReference type="PRO" id="PR:P48768"/>
<dbReference type="Proteomes" id="UP000002494">
    <property type="component" value="Unplaced"/>
</dbReference>
<dbReference type="GO" id="GO:0030424">
    <property type="term" value="C:axon"/>
    <property type="evidence" value="ECO:0000314"/>
    <property type="project" value="ARUK-UCL"/>
</dbReference>
<dbReference type="GO" id="GO:0043679">
    <property type="term" value="C:axon terminus"/>
    <property type="evidence" value="ECO:0000266"/>
    <property type="project" value="RGD"/>
</dbReference>
<dbReference type="GO" id="GO:0016323">
    <property type="term" value="C:basolateral plasma membrane"/>
    <property type="evidence" value="ECO:0007669"/>
    <property type="project" value="UniProtKB-SubCell"/>
</dbReference>
<dbReference type="GO" id="GO:0042995">
    <property type="term" value="C:cell projection"/>
    <property type="evidence" value="ECO:0000314"/>
    <property type="project" value="RGD"/>
</dbReference>
<dbReference type="GO" id="GO:0030425">
    <property type="term" value="C:dendrite"/>
    <property type="evidence" value="ECO:0000314"/>
    <property type="project" value="ARUK-UCL"/>
</dbReference>
<dbReference type="GO" id="GO:0043197">
    <property type="term" value="C:dendritic spine"/>
    <property type="evidence" value="ECO:0000314"/>
    <property type="project" value="RGD"/>
</dbReference>
<dbReference type="GO" id="GO:0005874">
    <property type="term" value="C:microtubule"/>
    <property type="evidence" value="ECO:0000314"/>
    <property type="project" value="RGD"/>
</dbReference>
<dbReference type="GO" id="GO:0043025">
    <property type="term" value="C:neuronal cell body"/>
    <property type="evidence" value="ECO:0000314"/>
    <property type="project" value="ARUK-UCL"/>
</dbReference>
<dbReference type="GO" id="GO:0043204">
    <property type="term" value="C:perikaryon"/>
    <property type="evidence" value="ECO:0007669"/>
    <property type="project" value="UniProtKB-SubCell"/>
</dbReference>
<dbReference type="GO" id="GO:0005886">
    <property type="term" value="C:plasma membrane"/>
    <property type="evidence" value="ECO:0000250"/>
    <property type="project" value="UniProtKB"/>
</dbReference>
<dbReference type="GO" id="GO:0098794">
    <property type="term" value="C:postsynapse"/>
    <property type="evidence" value="ECO:0000318"/>
    <property type="project" value="GO_Central"/>
</dbReference>
<dbReference type="GO" id="GO:0014069">
    <property type="term" value="C:postsynaptic density"/>
    <property type="evidence" value="ECO:0000266"/>
    <property type="project" value="RGD"/>
</dbReference>
<dbReference type="GO" id="GO:0045211">
    <property type="term" value="C:postsynaptic membrane"/>
    <property type="evidence" value="ECO:0000314"/>
    <property type="project" value="SynGO"/>
</dbReference>
<dbReference type="GO" id="GO:0098793">
    <property type="term" value="C:presynapse"/>
    <property type="evidence" value="ECO:0000266"/>
    <property type="project" value="RGD"/>
</dbReference>
<dbReference type="GO" id="GO:0042383">
    <property type="term" value="C:sarcolemma"/>
    <property type="evidence" value="ECO:0000318"/>
    <property type="project" value="GO_Central"/>
</dbReference>
<dbReference type="GO" id="GO:0045202">
    <property type="term" value="C:synapse"/>
    <property type="evidence" value="ECO:0000266"/>
    <property type="project" value="RGD"/>
</dbReference>
<dbReference type="GO" id="GO:0015085">
    <property type="term" value="F:calcium ion transmembrane transporter activity"/>
    <property type="evidence" value="ECO:0000266"/>
    <property type="project" value="RGD"/>
</dbReference>
<dbReference type="GO" id="GO:1905060">
    <property type="term" value="F:calcium:monoatomic cation antiporter activity involved in regulation of postsynaptic cytosolic calcium ion concentration"/>
    <property type="evidence" value="ECO:0000314"/>
    <property type="project" value="SynGO"/>
</dbReference>
<dbReference type="GO" id="GO:0005432">
    <property type="term" value="F:calcium:sodium antiporter activity"/>
    <property type="evidence" value="ECO:0000314"/>
    <property type="project" value="RGD"/>
</dbReference>
<dbReference type="GO" id="GO:0005516">
    <property type="term" value="F:calmodulin binding"/>
    <property type="evidence" value="ECO:0007669"/>
    <property type="project" value="UniProtKB-KW"/>
</dbReference>
<dbReference type="GO" id="GO:0046872">
    <property type="term" value="F:metal ion binding"/>
    <property type="evidence" value="ECO:0007669"/>
    <property type="project" value="UniProtKB-KW"/>
</dbReference>
<dbReference type="GO" id="GO:0015081">
    <property type="term" value="F:sodium ion transmembrane transporter activity"/>
    <property type="evidence" value="ECO:0000314"/>
    <property type="project" value="ARUK-UCL"/>
</dbReference>
<dbReference type="GO" id="GO:1990034">
    <property type="term" value="P:calcium ion export across plasma membrane"/>
    <property type="evidence" value="ECO:0000314"/>
    <property type="project" value="RGD"/>
</dbReference>
<dbReference type="GO" id="GO:0098703">
    <property type="term" value="P:calcium ion import across plasma membrane"/>
    <property type="evidence" value="ECO:0000314"/>
    <property type="project" value="RGD"/>
</dbReference>
<dbReference type="GO" id="GO:0070588">
    <property type="term" value="P:calcium ion transmembrane transport"/>
    <property type="evidence" value="ECO:0000314"/>
    <property type="project" value="ARUK-UCL"/>
</dbReference>
<dbReference type="GO" id="GO:0060402">
    <property type="term" value="P:calcium ion transport into cytosol"/>
    <property type="evidence" value="ECO:0000314"/>
    <property type="project" value="RGD"/>
</dbReference>
<dbReference type="GO" id="GO:0007154">
    <property type="term" value="P:cell communication"/>
    <property type="evidence" value="ECO:0007669"/>
    <property type="project" value="InterPro"/>
</dbReference>
<dbReference type="GO" id="GO:0050890">
    <property type="term" value="P:cognition"/>
    <property type="evidence" value="ECO:0000266"/>
    <property type="project" value="RGD"/>
</dbReference>
<dbReference type="GO" id="GO:0006874">
    <property type="term" value="P:intracellular calcium ion homeostasis"/>
    <property type="evidence" value="ECO:0000314"/>
    <property type="project" value="ARUK-UCL"/>
</dbReference>
<dbReference type="GO" id="GO:0007612">
    <property type="term" value="P:learning"/>
    <property type="evidence" value="ECO:0000250"/>
    <property type="project" value="UniProtKB"/>
</dbReference>
<dbReference type="GO" id="GO:0007611">
    <property type="term" value="P:learning or memory"/>
    <property type="evidence" value="ECO:0000266"/>
    <property type="project" value="RGD"/>
</dbReference>
<dbReference type="GO" id="GO:0060291">
    <property type="term" value="P:long-term synaptic potentiation"/>
    <property type="evidence" value="ECO:0000250"/>
    <property type="project" value="UniProtKB"/>
</dbReference>
<dbReference type="GO" id="GO:0007613">
    <property type="term" value="P:memory"/>
    <property type="evidence" value="ECO:0000250"/>
    <property type="project" value="UniProtKB"/>
</dbReference>
<dbReference type="GO" id="GO:0098815">
    <property type="term" value="P:modulation of excitatory postsynaptic potential"/>
    <property type="evidence" value="ECO:0000266"/>
    <property type="project" value="RGD"/>
</dbReference>
<dbReference type="GO" id="GO:0070050">
    <property type="term" value="P:neuron cellular homeostasis"/>
    <property type="evidence" value="ECO:0000266"/>
    <property type="project" value="RGD"/>
</dbReference>
<dbReference type="GO" id="GO:0099608">
    <property type="term" value="P:regulation of action potential firing pattern"/>
    <property type="evidence" value="ECO:0000266"/>
    <property type="project" value="RGD"/>
</dbReference>
<dbReference type="GO" id="GO:0106056">
    <property type="term" value="P:regulation of calcineurin-mediated signaling"/>
    <property type="evidence" value="ECO:0000266"/>
    <property type="project" value="RGD"/>
</dbReference>
<dbReference type="GO" id="GO:0051480">
    <property type="term" value="P:regulation of cytosolic calcium ion concentration"/>
    <property type="evidence" value="ECO:0000266"/>
    <property type="project" value="RGD"/>
</dbReference>
<dbReference type="GO" id="GO:0010468">
    <property type="term" value="P:regulation of gene expression"/>
    <property type="evidence" value="ECO:0000266"/>
    <property type="project" value="RGD"/>
</dbReference>
<dbReference type="GO" id="GO:0048172">
    <property type="term" value="P:regulation of short-term neuronal synaptic plasticity"/>
    <property type="evidence" value="ECO:0000250"/>
    <property type="project" value="UniProtKB"/>
</dbReference>
<dbReference type="GO" id="GO:0002931">
    <property type="term" value="P:response to ischemia"/>
    <property type="evidence" value="ECO:0000266"/>
    <property type="project" value="RGD"/>
</dbReference>
<dbReference type="GO" id="GO:0033280">
    <property type="term" value="P:response to vitamin D"/>
    <property type="evidence" value="ECO:0000270"/>
    <property type="project" value="RGD"/>
</dbReference>
<dbReference type="GO" id="GO:0035725">
    <property type="term" value="P:sodium ion transmembrane transport"/>
    <property type="evidence" value="ECO:0000314"/>
    <property type="project" value="ARUK-UCL"/>
</dbReference>
<dbReference type="GO" id="GO:0006814">
    <property type="term" value="P:sodium ion transport"/>
    <property type="evidence" value="ECO:0000314"/>
    <property type="project" value="RGD"/>
</dbReference>
<dbReference type="GO" id="GO:0050808">
    <property type="term" value="P:synapse organization"/>
    <property type="evidence" value="ECO:0000266"/>
    <property type="project" value="RGD"/>
</dbReference>
<dbReference type="GO" id="GO:0021537">
    <property type="term" value="P:telencephalon development"/>
    <property type="evidence" value="ECO:0000270"/>
    <property type="project" value="RGD"/>
</dbReference>
<dbReference type="FunFam" id="1.20.1420.30:FF:000001">
    <property type="entry name" value="sodium/calcium exchanger 1 isoform X1"/>
    <property type="match status" value="1"/>
</dbReference>
<dbReference type="FunFam" id="1.20.1420.30:FF:000003">
    <property type="entry name" value="sodium/calcium exchanger 1 isoform X1"/>
    <property type="match status" value="1"/>
</dbReference>
<dbReference type="FunFam" id="2.60.40.2030:FF:000001">
    <property type="entry name" value="sodium/calcium exchanger 1 isoform X1"/>
    <property type="match status" value="1"/>
</dbReference>
<dbReference type="FunFam" id="2.60.40.2030:FF:000002">
    <property type="entry name" value="sodium/calcium exchanger 3 isoform X1"/>
    <property type="match status" value="1"/>
</dbReference>
<dbReference type="Gene3D" id="2.60.40.2030">
    <property type="match status" value="2"/>
</dbReference>
<dbReference type="Gene3D" id="1.20.1420.30">
    <property type="entry name" value="NCX, central ion-binding region"/>
    <property type="match status" value="2"/>
</dbReference>
<dbReference type="InterPro" id="IPR051171">
    <property type="entry name" value="CaCA"/>
</dbReference>
<dbReference type="InterPro" id="IPR038081">
    <property type="entry name" value="CalX-like_sf"/>
</dbReference>
<dbReference type="InterPro" id="IPR003644">
    <property type="entry name" value="Calx_beta"/>
</dbReference>
<dbReference type="InterPro" id="IPR004836">
    <property type="entry name" value="Na_Ca_Ex"/>
</dbReference>
<dbReference type="InterPro" id="IPR032452">
    <property type="entry name" value="Na_Ca_Ex_C-exten"/>
</dbReference>
<dbReference type="InterPro" id="IPR004837">
    <property type="entry name" value="NaCa_Exmemb"/>
</dbReference>
<dbReference type="InterPro" id="IPR044880">
    <property type="entry name" value="NCX_ion-bd_dom_sf"/>
</dbReference>
<dbReference type="NCBIfam" id="TIGR00845">
    <property type="entry name" value="caca"/>
    <property type="match status" value="1"/>
</dbReference>
<dbReference type="PANTHER" id="PTHR11878">
    <property type="entry name" value="SODIUM/CALCIUM EXCHANGER"/>
    <property type="match status" value="1"/>
</dbReference>
<dbReference type="PANTHER" id="PTHR11878:SF8">
    <property type="entry name" value="SODIUM_CALCIUM EXCHANGER 2"/>
    <property type="match status" value="1"/>
</dbReference>
<dbReference type="Pfam" id="PF03160">
    <property type="entry name" value="Calx-beta"/>
    <property type="match status" value="1"/>
</dbReference>
<dbReference type="Pfam" id="PF01699">
    <property type="entry name" value="Na_Ca_ex"/>
    <property type="match status" value="2"/>
</dbReference>
<dbReference type="Pfam" id="PF16494">
    <property type="entry name" value="Na_Ca_ex_C"/>
    <property type="match status" value="1"/>
</dbReference>
<dbReference type="PRINTS" id="PR01259">
    <property type="entry name" value="NACAEXCHNGR"/>
</dbReference>
<dbReference type="SMART" id="SM00237">
    <property type="entry name" value="Calx_beta"/>
    <property type="match status" value="2"/>
</dbReference>
<dbReference type="SUPFAM" id="SSF141072">
    <property type="entry name" value="CalX-like"/>
    <property type="match status" value="2"/>
</dbReference>
<accession>P48768</accession>
<feature type="signal peptide" evidence="3">
    <location>
        <begin position="1"/>
        <end position="20"/>
    </location>
</feature>
<feature type="chain" id="PRO_0000019383" description="Sodium/calcium exchanger 2">
    <location>
        <begin position="21"/>
        <end position="921"/>
    </location>
</feature>
<feature type="topological domain" description="Extracellular" evidence="3">
    <location>
        <begin position="21"/>
        <end position="68"/>
    </location>
</feature>
<feature type="transmembrane region" description="Helical" evidence="3">
    <location>
        <begin position="69"/>
        <end position="90"/>
    </location>
</feature>
<feature type="topological domain" description="Cytoplasmic" evidence="3">
    <location>
        <begin position="91"/>
        <end position="130"/>
    </location>
</feature>
<feature type="transmembrane region" description="Helical" evidence="3">
    <location>
        <begin position="131"/>
        <end position="152"/>
    </location>
</feature>
<feature type="topological domain" description="Extracellular" evidence="3">
    <location>
        <begin position="153"/>
        <end position="164"/>
    </location>
</feature>
<feature type="transmembrane region" description="Helical" evidence="3">
    <location>
        <begin position="165"/>
        <end position="185"/>
    </location>
</feature>
<feature type="topological domain" description="Cytoplasmic" evidence="3">
    <location>
        <begin position="186"/>
        <end position="196"/>
    </location>
</feature>
<feature type="transmembrane region" description="Helical" evidence="3">
    <location>
        <begin position="197"/>
        <end position="219"/>
    </location>
</feature>
<feature type="topological domain" description="Extracellular" evidence="3">
    <location>
        <begin position="220"/>
        <end position="222"/>
    </location>
</feature>
<feature type="transmembrane region" description="Helical" evidence="3">
    <location>
        <begin position="223"/>
        <end position="246"/>
    </location>
</feature>
<feature type="topological domain" description="Cytoplasmic" evidence="3">
    <location>
        <begin position="247"/>
        <end position="720"/>
    </location>
</feature>
<feature type="transmembrane region" description="Helical" evidence="3">
    <location>
        <begin position="721"/>
        <end position="740"/>
    </location>
</feature>
<feature type="topological domain" description="Extracellular" evidence="3">
    <location>
        <begin position="741"/>
        <end position="747"/>
    </location>
</feature>
<feature type="transmembrane region" description="Helical" evidence="3">
    <location>
        <begin position="748"/>
        <end position="770"/>
    </location>
</feature>
<feature type="topological domain" description="Cytoplasmic" evidence="3">
    <location>
        <begin position="771"/>
        <end position="772"/>
    </location>
</feature>
<feature type="transmembrane region" description="Helical" evidence="3">
    <location>
        <begin position="773"/>
        <end position="791"/>
    </location>
</feature>
<feature type="topological domain" description="Extracellular" evidence="3">
    <location>
        <begin position="792"/>
        <end position="822"/>
    </location>
</feature>
<feature type="transmembrane region" description="Helical" evidence="3">
    <location>
        <begin position="823"/>
        <end position="843"/>
    </location>
</feature>
<feature type="topological domain" description="Cytoplasmic" evidence="3">
    <location>
        <begin position="844"/>
        <end position="854"/>
    </location>
</feature>
<feature type="transmembrane region" description="Helical" evidence="3">
    <location>
        <begin position="855"/>
        <end position="875"/>
    </location>
</feature>
<feature type="topological domain" description="Extracellular" evidence="3">
    <location>
        <begin position="876"/>
        <end position="892"/>
    </location>
</feature>
<feature type="transmembrane region" description="Helical" evidence="3">
    <location>
        <begin position="893"/>
        <end position="909"/>
    </location>
</feature>
<feature type="topological domain" description="Cytoplasmic" evidence="3">
    <location>
        <begin position="910"/>
        <end position="921"/>
    </location>
</feature>
<feature type="repeat" description="Alpha-1">
    <location>
        <begin position="135"/>
        <end position="175"/>
    </location>
</feature>
<feature type="domain" description="Calx-beta 1">
    <location>
        <begin position="384"/>
        <end position="483"/>
    </location>
</feature>
<feature type="domain" description="Calx-beta 2">
    <location>
        <begin position="512"/>
        <end position="612"/>
    </location>
</feature>
<feature type="repeat" description="Alpha-2">
    <location>
        <begin position="790"/>
        <end position="826"/>
    </location>
</feature>
<feature type="region of interest" description="Disordered" evidence="4">
    <location>
        <begin position="23"/>
        <end position="42"/>
    </location>
</feature>
<feature type="region of interest" description="Putative calmodulin-binding region" evidence="1">
    <location>
        <begin position="248"/>
        <end position="267"/>
    </location>
</feature>
<feature type="region of interest" description="Disordered" evidence="4">
    <location>
        <begin position="372"/>
        <end position="391"/>
    </location>
</feature>
<feature type="binding site" evidence="1">
    <location>
        <position position="407"/>
    </location>
    <ligand>
        <name>Ca(2+)</name>
        <dbReference type="ChEBI" id="CHEBI:29108"/>
        <label>1</label>
    </ligand>
</feature>
<feature type="binding site" evidence="1">
    <location>
        <position position="407"/>
    </location>
    <ligand>
        <name>Ca(2+)</name>
        <dbReference type="ChEBI" id="CHEBI:29108"/>
        <label>2</label>
    </ligand>
</feature>
<feature type="binding site" evidence="1">
    <location>
        <position position="407"/>
    </location>
    <ligand>
        <name>Ca(2+)</name>
        <dbReference type="ChEBI" id="CHEBI:29108"/>
        <label>3</label>
    </ligand>
</feature>
<feature type="binding site" evidence="1">
    <location>
        <position position="443"/>
    </location>
    <ligand>
        <name>Ca(2+)</name>
        <dbReference type="ChEBI" id="CHEBI:29108"/>
        <label>1</label>
    </ligand>
</feature>
<feature type="binding site" evidence="1">
    <location>
        <position position="443"/>
    </location>
    <ligand>
        <name>Ca(2+)</name>
        <dbReference type="ChEBI" id="CHEBI:29108"/>
        <label>4</label>
    </ligand>
</feature>
<feature type="binding site" evidence="1">
    <location>
        <position position="468"/>
    </location>
    <ligand>
        <name>Ca(2+)</name>
        <dbReference type="ChEBI" id="CHEBI:29108"/>
        <label>2</label>
    </ligand>
</feature>
<feature type="binding site" evidence="1">
    <location>
        <position position="469"/>
    </location>
    <ligand>
        <name>Ca(2+)</name>
        <dbReference type="ChEBI" id="CHEBI:29108"/>
        <label>1</label>
    </ligand>
</feature>
<feature type="binding site" evidence="1">
    <location>
        <position position="469"/>
    </location>
    <ligand>
        <name>Ca(2+)</name>
        <dbReference type="ChEBI" id="CHEBI:29108"/>
        <label>2</label>
    </ligand>
</feature>
<feature type="binding site" evidence="1">
    <location>
        <position position="469"/>
    </location>
    <ligand>
        <name>Ca(2+)</name>
        <dbReference type="ChEBI" id="CHEBI:29108"/>
        <label>3</label>
    </ligand>
</feature>
<feature type="binding site" evidence="1">
    <location>
        <position position="469"/>
    </location>
    <ligand>
        <name>Ca(2+)</name>
        <dbReference type="ChEBI" id="CHEBI:29108"/>
        <label>4</label>
    </ligand>
</feature>
<feature type="binding site" evidence="1">
    <location>
        <position position="471"/>
    </location>
    <ligand>
        <name>Ca(2+)</name>
        <dbReference type="ChEBI" id="CHEBI:29108"/>
        <label>3</label>
    </ligand>
</feature>
<feature type="binding site" evidence="1">
    <location>
        <position position="473"/>
    </location>
    <ligand>
        <name>Ca(2+)</name>
        <dbReference type="ChEBI" id="CHEBI:29108"/>
        <label>1</label>
    </ligand>
</feature>
<feature type="binding site" evidence="1">
    <location>
        <position position="473"/>
    </location>
    <ligand>
        <name>Ca(2+)</name>
        <dbReference type="ChEBI" id="CHEBI:29108"/>
        <label>3</label>
    </ligand>
</feature>
<feature type="binding site" evidence="1">
    <location>
        <position position="473"/>
    </location>
    <ligand>
        <name>Ca(2+)</name>
        <dbReference type="ChEBI" id="CHEBI:29108"/>
        <label>4</label>
    </ligand>
</feature>
<feature type="binding site" evidence="1">
    <location>
        <position position="476"/>
    </location>
    <ligand>
        <name>Ca(2+)</name>
        <dbReference type="ChEBI" id="CHEBI:29108"/>
        <label>4</label>
    </ligand>
</feature>
<feature type="binding site" evidence="1">
    <location>
        <position position="518"/>
    </location>
    <ligand>
        <name>Ca(2+)</name>
        <dbReference type="ChEBI" id="CHEBI:29108"/>
        <label>3</label>
    </ligand>
</feature>
<feature type="binding site" evidence="1">
    <location>
        <position position="519"/>
    </location>
    <ligand>
        <name>Ca(2+)</name>
        <dbReference type="ChEBI" id="CHEBI:29108"/>
        <label>2</label>
    </ligand>
</feature>
<feature type="binding site" evidence="1">
    <location>
        <position position="520"/>
    </location>
    <ligand>
        <name>Ca(2+)</name>
        <dbReference type="ChEBI" id="CHEBI:29108"/>
        <label>2</label>
    </ligand>
</feature>
<feature type="binding site" evidence="1">
    <location>
        <position position="520"/>
    </location>
    <ligand>
        <name>Ca(2+)</name>
        <dbReference type="ChEBI" id="CHEBI:29108"/>
        <label>3</label>
    </ligand>
</feature>
<feature type="binding site" evidence="1">
    <location>
        <position position="536"/>
    </location>
    <ligand>
        <name>Ca(2+)</name>
        <dbReference type="ChEBI" id="CHEBI:29108"/>
        <label>5</label>
    </ligand>
</feature>
<feature type="binding site" evidence="1">
    <location>
        <position position="598"/>
    </location>
    <ligand>
        <name>Ca(2+)</name>
        <dbReference type="ChEBI" id="CHEBI:29108"/>
        <label>5</label>
    </ligand>
</feature>
<feature type="binding site" evidence="1">
    <location>
        <position position="598"/>
    </location>
    <ligand>
        <name>Ca(2+)</name>
        <dbReference type="ChEBI" id="CHEBI:29108"/>
        <label>6</label>
    </ligand>
</feature>
<feature type="binding site" evidence="1">
    <location>
        <position position="599"/>
    </location>
    <ligand>
        <name>Ca(2+)</name>
        <dbReference type="ChEBI" id="CHEBI:29108"/>
        <label>6</label>
    </ligand>
</feature>
<feature type="binding site" evidence="1">
    <location>
        <position position="600"/>
    </location>
    <ligand>
        <name>Ca(2+)</name>
        <dbReference type="ChEBI" id="CHEBI:29108"/>
        <label>5</label>
    </ligand>
</feature>
<feature type="binding site" evidence="1">
    <location>
        <position position="600"/>
    </location>
    <ligand>
        <name>Ca(2+)</name>
        <dbReference type="ChEBI" id="CHEBI:29108"/>
        <label>6</label>
    </ligand>
</feature>
<feature type="binding site" evidence="1">
    <location>
        <position position="665"/>
    </location>
    <ligand>
        <name>Ca(2+)</name>
        <dbReference type="ChEBI" id="CHEBI:29108"/>
        <label>5</label>
    </ligand>
</feature>
<feature type="modified residue" description="Phosphoserine" evidence="2">
    <location>
        <position position="622"/>
    </location>
</feature>
<feature type="glycosylation site" description="N-linked (GlcNAc...) asparagine" evidence="3">
    <location>
        <position position="34"/>
    </location>
</feature>
<feature type="glycosylation site" description="N-linked (GlcNAc...) asparagine" evidence="3">
    <location>
        <position position="817"/>
    </location>
</feature>
<proteinExistence type="evidence at protein level"/>
<protein>
    <recommendedName>
        <fullName>Sodium/calcium exchanger 2</fullName>
    </recommendedName>
    <alternativeName>
        <fullName>Na(+)/Ca(2+)-exchange protein 2</fullName>
    </alternativeName>
    <alternativeName>
        <fullName>Solute carrier family 8 member 2</fullName>
    </alternativeName>
</protein>
<sequence>MAPLALVGVALLLGAPHCLGEATPTPSLPPPPANDSDASPGGCQGSYRCQPGVLLPVWEPDDPSLGDKAARAVVYFVAMVYMFLGLSIIADRFMASIEVITSKEKEITITKANGETSVGTVRIWNETVSNLTLMALGSSAPEILLSVIEVCGHNFQAGELGPGTIVGSAAFNMFVVIAVCVYVIPAGESRKIKHLRVFFVTASWSIFAYVWLYLILAVFSPGVVQVWEALLTLVFFPVCVVFAWMADKRLLFYKYVYKRYRTDPRSGIIIGAEGDPPKSIELDGTFVGTEVPGELGALGTGPAEARELDASRREVIQILKDLKQKHPDKDLEQLVGIAKYYALLHQQKSRAFYRIQATRLMTGAGNVLRRHAADAARRPGANDGAPDDEDDGASRIFFEPSLYHCLENCGSVLLSVACQGGEGNSTFYVDYRTEDGSAKAGSDYEYSEGTLVFKPGETQKELRIGIIDDDIFEEDEHFFVRLLNLRVGDAQGMFEPDGGGRPKGRLVAPLLATVTILDDDHAGIFSFQDRLLHVSECMGTVDVRVVRSSGARGTVRLPYRTVDGTARGGGVHYEDACGELEFGDDETMKTLQVKIVDDEEYEKKDNFFIELGQPQWLKRGISALLLNQGDGDRKLTAEEEEAQRIAEMGKPVLGENCRLEVIIEESYDFKNTVDKLIKKTNLALVIGTHSWREQFLEAVTVSAGDEEEDEDGSREERLPSCFDYVMHFLTVFWKVLFACLPPTEYCHGWACFGVCILVIGLLTALIGDLASHFGCTVGLKDSVNAVVFVALGTSIPDTFASKVAALQDQCADASIGNVTGSNAVNVFLGLGVAWSVAAVYWAVQGRPFEVRTGTLAFSVTLFTVFAFVGIAVLLYRRRPHIGGELGGPRGPKLATTALFLGLWFLYILFASLEAYCHIRGF</sequence>
<keyword id="KW-0050">Antiport</keyword>
<keyword id="KW-0106">Calcium</keyword>
<keyword id="KW-0109">Calcium transport</keyword>
<keyword id="KW-0112">Calmodulin-binding</keyword>
<keyword id="KW-1003">Cell membrane</keyword>
<keyword id="KW-0966">Cell projection</keyword>
<keyword id="KW-0325">Glycoprotein</keyword>
<keyword id="KW-0406">Ion transport</keyword>
<keyword id="KW-0472">Membrane</keyword>
<keyword id="KW-0479">Metal-binding</keyword>
<keyword id="KW-0597">Phosphoprotein</keyword>
<keyword id="KW-1185">Reference proteome</keyword>
<keyword id="KW-0677">Repeat</keyword>
<keyword id="KW-0732">Signal</keyword>
<keyword id="KW-0915">Sodium</keyword>
<keyword id="KW-0739">Sodium transport</keyword>
<keyword id="KW-0770">Synapse</keyword>
<keyword id="KW-0812">Transmembrane</keyword>
<keyword id="KW-1133">Transmembrane helix</keyword>
<keyword id="KW-0813">Transport</keyword>
<name>NAC2_RAT</name>
<comment type="function">
    <text evidence="2 6 8">Mediates the electrogenic exchange of Ca(2+) against Na(+) ions across the cell membrane, and thereby contributes to the regulation of cytoplasmic Ca(2+) levels and Ca(2+)-dependent cellular processes (PubMed:8021246, PubMed:9486131). Contributes to cellular Ca(2+) homeostasis in excitable cells (By similarity). Contributes to the rapid decrease of cytoplasmic Ca(2+) levels back to baseline after neuronal activation, and thereby contributes to modulate synaptic plasticity, learning and memory (By similarity). Plays a role in regulating urinary Ca(2+) and Na(+) excretion (By similarity).</text>
</comment>
<comment type="catalytic activity">
    <reaction evidence="8">
        <text>Ca(2+)(in) + 3 Na(+)(out) = Ca(2+)(out) + 3 Na(+)(in)</text>
        <dbReference type="Rhea" id="RHEA:69955"/>
        <dbReference type="ChEBI" id="CHEBI:29101"/>
        <dbReference type="ChEBI" id="CHEBI:29108"/>
    </reaction>
</comment>
<comment type="activity regulation">
    <text evidence="6 8">Calcium transport is down-regulated by Na(+) and stimulated by Ca(2+).</text>
</comment>
<comment type="subcellular location">
    <subcellularLocation>
        <location evidence="5 6 8">Cell membrane</location>
        <topology evidence="9">Multi-pass membrane protein</topology>
    </subcellularLocation>
    <subcellularLocation>
        <location evidence="2">Basolateral cell membrane</location>
        <topology evidence="2">Multi-pass membrane protein</topology>
    </subcellularLocation>
    <subcellularLocation>
        <location evidence="5">Perikaryon</location>
    </subcellularLocation>
    <subcellularLocation>
        <location evidence="5">Cell projection</location>
        <location evidence="5">Dendrite</location>
    </subcellularLocation>
    <subcellularLocation>
        <location evidence="5">Cell projection</location>
        <location evidence="5">Dendritic spine</location>
    </subcellularLocation>
</comment>
<comment type="tissue specificity">
    <text evidence="6 7">Detected in neocortex and hippocampus on pyramidal cells, astrocyte processes and dendrites (at protein level) (PubMed:16914199). Brain and skeletal muscle.</text>
</comment>
<comment type="domain">
    <text evidence="1">The cytoplasmic Calx-beta domains bind the regulatory Ca(2+). The first Calx-beta domain can bind up to four Ca(2+) ions. The second domain can bind another two Ca(2+) ions that are essential for calcium-regulated ion exchange.</text>
</comment>
<comment type="similarity">
    <text evidence="9">Belongs to the Ca(2+):cation antiporter (CaCA) (TC 2.A.19) family. SLC8 subfamily.</text>
</comment>
<gene>
    <name type="primary">Slc8a2</name>
    <name type="synonym">Ncx2</name>
</gene>